<proteinExistence type="inferred from homology"/>
<sequence length="324" mass="35315">MKQVNGQKLLESLGNGVSAIRGRITPDAPMDRVTWFRAGGLAELMFQPHDTDDLTTFLKLVPEEVPVLVVGVGSNLLVRDGGIPGVVIRLSAKGFGDLELAGEHRIKAGAICPDKNLAAMALDHGIGGFYFYYGIPGSIGGALRMNAGANAGETSARVLEVHAVDRKGDRHVLSKSEMGYGYRHSGAAKDLIFTHAIFEGYAEDKAKIRNDMDAVRQHRETVQPIREKTGGSTFKNPEGHSAWKLIDEAGCRGMMIGNAQMSPLHCNFMINTGQATGYELEYLGETVRQRVMDHSGVKLEWEIKRVGNFMPGYEIKEFLGRATA</sequence>
<name>MURB_SINMW</name>
<gene>
    <name evidence="1" type="primary">murB</name>
    <name type="ordered locus">Smed_2080</name>
</gene>
<organism>
    <name type="scientific">Sinorhizobium medicae (strain WSM419)</name>
    <name type="common">Ensifer medicae</name>
    <dbReference type="NCBI Taxonomy" id="366394"/>
    <lineage>
        <taxon>Bacteria</taxon>
        <taxon>Pseudomonadati</taxon>
        <taxon>Pseudomonadota</taxon>
        <taxon>Alphaproteobacteria</taxon>
        <taxon>Hyphomicrobiales</taxon>
        <taxon>Rhizobiaceae</taxon>
        <taxon>Sinorhizobium/Ensifer group</taxon>
        <taxon>Sinorhizobium</taxon>
    </lineage>
</organism>
<evidence type="ECO:0000255" key="1">
    <source>
        <dbReference type="HAMAP-Rule" id="MF_00037"/>
    </source>
</evidence>
<dbReference type="EC" id="1.3.1.98" evidence="1"/>
<dbReference type="EMBL" id="CP000738">
    <property type="protein sequence ID" value="ABR60913.1"/>
    <property type="molecule type" value="Genomic_DNA"/>
</dbReference>
<dbReference type="RefSeq" id="WP_011976210.1">
    <property type="nucleotide sequence ID" value="NC_009636.1"/>
</dbReference>
<dbReference type="RefSeq" id="YP_001327748.1">
    <property type="nucleotide sequence ID" value="NC_009636.1"/>
</dbReference>
<dbReference type="SMR" id="A6UB83"/>
<dbReference type="STRING" id="366394.Smed_2080"/>
<dbReference type="GeneID" id="61612989"/>
<dbReference type="KEGG" id="smd:Smed_2080"/>
<dbReference type="PATRIC" id="fig|366394.8.peg.5238"/>
<dbReference type="eggNOG" id="COG0812">
    <property type="taxonomic scope" value="Bacteria"/>
</dbReference>
<dbReference type="HOGENOM" id="CLU_035304_1_0_5"/>
<dbReference type="OrthoDB" id="9804753at2"/>
<dbReference type="UniPathway" id="UPA00219"/>
<dbReference type="Proteomes" id="UP000001108">
    <property type="component" value="Chromosome"/>
</dbReference>
<dbReference type="GO" id="GO:0005829">
    <property type="term" value="C:cytosol"/>
    <property type="evidence" value="ECO:0007669"/>
    <property type="project" value="TreeGrafter"/>
</dbReference>
<dbReference type="GO" id="GO:0071949">
    <property type="term" value="F:FAD binding"/>
    <property type="evidence" value="ECO:0007669"/>
    <property type="project" value="InterPro"/>
</dbReference>
<dbReference type="GO" id="GO:0008762">
    <property type="term" value="F:UDP-N-acetylmuramate dehydrogenase activity"/>
    <property type="evidence" value="ECO:0007669"/>
    <property type="project" value="UniProtKB-UniRule"/>
</dbReference>
<dbReference type="GO" id="GO:0051301">
    <property type="term" value="P:cell division"/>
    <property type="evidence" value="ECO:0007669"/>
    <property type="project" value="UniProtKB-KW"/>
</dbReference>
<dbReference type="GO" id="GO:0071555">
    <property type="term" value="P:cell wall organization"/>
    <property type="evidence" value="ECO:0007669"/>
    <property type="project" value="UniProtKB-KW"/>
</dbReference>
<dbReference type="GO" id="GO:0009252">
    <property type="term" value="P:peptidoglycan biosynthetic process"/>
    <property type="evidence" value="ECO:0007669"/>
    <property type="project" value="UniProtKB-UniRule"/>
</dbReference>
<dbReference type="GO" id="GO:0008360">
    <property type="term" value="P:regulation of cell shape"/>
    <property type="evidence" value="ECO:0007669"/>
    <property type="project" value="UniProtKB-KW"/>
</dbReference>
<dbReference type="Gene3D" id="3.30.465.10">
    <property type="match status" value="1"/>
</dbReference>
<dbReference type="Gene3D" id="3.90.78.10">
    <property type="entry name" value="UDP-N-acetylenolpyruvoylglucosamine reductase, C-terminal domain"/>
    <property type="match status" value="1"/>
</dbReference>
<dbReference type="Gene3D" id="3.30.43.10">
    <property type="entry name" value="Uridine Diphospho-n-acetylenolpyruvylglucosamine Reductase, domain 2"/>
    <property type="match status" value="1"/>
</dbReference>
<dbReference type="HAMAP" id="MF_00037">
    <property type="entry name" value="MurB"/>
    <property type="match status" value="1"/>
</dbReference>
<dbReference type="InterPro" id="IPR016166">
    <property type="entry name" value="FAD-bd_PCMH"/>
</dbReference>
<dbReference type="InterPro" id="IPR036318">
    <property type="entry name" value="FAD-bd_PCMH-like_sf"/>
</dbReference>
<dbReference type="InterPro" id="IPR016167">
    <property type="entry name" value="FAD-bd_PCMH_sub1"/>
</dbReference>
<dbReference type="InterPro" id="IPR016169">
    <property type="entry name" value="FAD-bd_PCMH_sub2"/>
</dbReference>
<dbReference type="InterPro" id="IPR003170">
    <property type="entry name" value="MurB"/>
</dbReference>
<dbReference type="InterPro" id="IPR011601">
    <property type="entry name" value="MurB_C"/>
</dbReference>
<dbReference type="InterPro" id="IPR036635">
    <property type="entry name" value="MurB_C_sf"/>
</dbReference>
<dbReference type="InterPro" id="IPR006094">
    <property type="entry name" value="Oxid_FAD_bind_N"/>
</dbReference>
<dbReference type="NCBIfam" id="TIGR00179">
    <property type="entry name" value="murB"/>
    <property type="match status" value="1"/>
</dbReference>
<dbReference type="NCBIfam" id="NF010480">
    <property type="entry name" value="PRK13905.1"/>
    <property type="match status" value="1"/>
</dbReference>
<dbReference type="PANTHER" id="PTHR21071">
    <property type="entry name" value="UDP-N-ACETYLENOLPYRUVOYLGLUCOSAMINE REDUCTASE"/>
    <property type="match status" value="1"/>
</dbReference>
<dbReference type="PANTHER" id="PTHR21071:SF4">
    <property type="entry name" value="UDP-N-ACETYLENOLPYRUVOYLGLUCOSAMINE REDUCTASE"/>
    <property type="match status" value="1"/>
</dbReference>
<dbReference type="Pfam" id="PF01565">
    <property type="entry name" value="FAD_binding_4"/>
    <property type="match status" value="1"/>
</dbReference>
<dbReference type="Pfam" id="PF02873">
    <property type="entry name" value="MurB_C"/>
    <property type="match status" value="1"/>
</dbReference>
<dbReference type="SUPFAM" id="SSF56176">
    <property type="entry name" value="FAD-binding/transporter-associated domain-like"/>
    <property type="match status" value="1"/>
</dbReference>
<dbReference type="SUPFAM" id="SSF56194">
    <property type="entry name" value="Uridine diphospho-N-Acetylenolpyruvylglucosamine reductase, MurB, C-terminal domain"/>
    <property type="match status" value="1"/>
</dbReference>
<dbReference type="PROSITE" id="PS51387">
    <property type="entry name" value="FAD_PCMH"/>
    <property type="match status" value="1"/>
</dbReference>
<accession>A6UB83</accession>
<keyword id="KW-0131">Cell cycle</keyword>
<keyword id="KW-0132">Cell division</keyword>
<keyword id="KW-0133">Cell shape</keyword>
<keyword id="KW-0961">Cell wall biogenesis/degradation</keyword>
<keyword id="KW-0963">Cytoplasm</keyword>
<keyword id="KW-0274">FAD</keyword>
<keyword id="KW-0285">Flavoprotein</keyword>
<keyword id="KW-0521">NADP</keyword>
<keyword id="KW-0560">Oxidoreductase</keyword>
<keyword id="KW-0573">Peptidoglycan synthesis</keyword>
<reference key="1">
    <citation type="submission" date="2007-06" db="EMBL/GenBank/DDBJ databases">
        <title>Complete sequence of Sinorhizobium medicae WSM419 chromosome.</title>
        <authorList>
            <consortium name="US DOE Joint Genome Institute"/>
            <person name="Copeland A."/>
            <person name="Lucas S."/>
            <person name="Lapidus A."/>
            <person name="Barry K."/>
            <person name="Glavina del Rio T."/>
            <person name="Dalin E."/>
            <person name="Tice H."/>
            <person name="Pitluck S."/>
            <person name="Chain P."/>
            <person name="Malfatti S."/>
            <person name="Shin M."/>
            <person name="Vergez L."/>
            <person name="Schmutz J."/>
            <person name="Larimer F."/>
            <person name="Land M."/>
            <person name="Hauser L."/>
            <person name="Kyrpides N."/>
            <person name="Mikhailova N."/>
            <person name="Reeve W.G."/>
            <person name="Richardson P."/>
        </authorList>
    </citation>
    <scope>NUCLEOTIDE SEQUENCE [LARGE SCALE GENOMIC DNA]</scope>
    <source>
        <strain>WSM419</strain>
    </source>
</reference>
<protein>
    <recommendedName>
        <fullName evidence="1">UDP-N-acetylenolpyruvoylglucosamine reductase</fullName>
        <ecNumber evidence="1">1.3.1.98</ecNumber>
    </recommendedName>
    <alternativeName>
        <fullName evidence="1">UDP-N-acetylmuramate dehydrogenase</fullName>
    </alternativeName>
</protein>
<feature type="chain" id="PRO_0000332505" description="UDP-N-acetylenolpyruvoylglucosamine reductase">
    <location>
        <begin position="1"/>
        <end position="324"/>
    </location>
</feature>
<feature type="domain" description="FAD-binding PCMH-type" evidence="1">
    <location>
        <begin position="36"/>
        <end position="211"/>
    </location>
</feature>
<feature type="active site" evidence="1">
    <location>
        <position position="183"/>
    </location>
</feature>
<feature type="active site" description="Proton donor" evidence="1">
    <location>
        <position position="232"/>
    </location>
</feature>
<feature type="active site" evidence="1">
    <location>
        <position position="302"/>
    </location>
</feature>
<comment type="function">
    <text evidence="1">Cell wall formation.</text>
</comment>
<comment type="catalytic activity">
    <reaction evidence="1">
        <text>UDP-N-acetyl-alpha-D-muramate + NADP(+) = UDP-N-acetyl-3-O-(1-carboxyvinyl)-alpha-D-glucosamine + NADPH + H(+)</text>
        <dbReference type="Rhea" id="RHEA:12248"/>
        <dbReference type="ChEBI" id="CHEBI:15378"/>
        <dbReference type="ChEBI" id="CHEBI:57783"/>
        <dbReference type="ChEBI" id="CHEBI:58349"/>
        <dbReference type="ChEBI" id="CHEBI:68483"/>
        <dbReference type="ChEBI" id="CHEBI:70757"/>
        <dbReference type="EC" id="1.3.1.98"/>
    </reaction>
</comment>
<comment type="cofactor">
    <cofactor evidence="1">
        <name>FAD</name>
        <dbReference type="ChEBI" id="CHEBI:57692"/>
    </cofactor>
</comment>
<comment type="pathway">
    <text evidence="1">Cell wall biogenesis; peptidoglycan biosynthesis.</text>
</comment>
<comment type="subcellular location">
    <subcellularLocation>
        <location evidence="1">Cytoplasm</location>
    </subcellularLocation>
</comment>
<comment type="similarity">
    <text evidence="1">Belongs to the MurB family.</text>
</comment>